<evidence type="ECO:0000250" key="1"/>
<evidence type="ECO:0000255" key="2"/>
<evidence type="ECO:0000256" key="3">
    <source>
        <dbReference type="SAM" id="MobiDB-lite"/>
    </source>
</evidence>
<evidence type="ECO:0000305" key="4"/>
<proteinExistence type="inferred from homology"/>
<keyword id="KW-0175">Coiled coil</keyword>
<keyword id="KW-0472">Membrane</keyword>
<keyword id="KW-0496">Mitochondrion</keyword>
<keyword id="KW-0999">Mitochondrion inner membrane</keyword>
<keyword id="KW-1185">Reference proteome</keyword>
<keyword id="KW-0809">Transit peptide</keyword>
<keyword id="KW-0812">Transmembrane</keyword>
<keyword id="KW-1133">Transmembrane helix</keyword>
<organism>
    <name type="scientific">Arthroderma otae (strain ATCC MYA-4605 / CBS 113480)</name>
    <name type="common">Microsporum canis</name>
    <dbReference type="NCBI Taxonomy" id="554155"/>
    <lineage>
        <taxon>Eukaryota</taxon>
        <taxon>Fungi</taxon>
        <taxon>Dikarya</taxon>
        <taxon>Ascomycota</taxon>
        <taxon>Pezizomycotina</taxon>
        <taxon>Eurotiomycetes</taxon>
        <taxon>Eurotiomycetidae</taxon>
        <taxon>Onygenales</taxon>
        <taxon>Arthrodermataceae</taxon>
        <taxon>Microsporum</taxon>
    </lineage>
</organism>
<sequence length="671" mass="73463">MLRNSIAPSRGLGSLARQRAAGPWLTTSRRSLLGKRGYSKARSAGWPYESSIRPGTAVLPTRKTSCATFTSSATLRENEPNVRSPPSPSSASAITPEGVSKPPPSSPAAQGLTSPGSSVNPPEPPKTQTGAPPPPPPPPPARKAKGKFTRFLLYLVLTTGVAYAGGVWFSLKSDNFHDFFTEYVPYGEEAVLYLEELDFRRRFPNATRHINTRPAAPRDEGEKVTIPSKSGVSWKVAEKEGGSDVSQKGRHMSALDAETSRTTDKSKSAPKRPASEDKVVSETTGTKKDKSNERVPVTDTKKPAVSLDEPRKPAVPTVSSIEPLAALQDDATIQELTKIVNGLITVINADESASKLAAPLTKAKEDFLKLGEQISRIKEEALAAAKEEINNAHLEFDRSATELVRRIDEVRAEEAAQYREEFEMEREKLAHSYQEKIKTEIERANAVAEQRLRNELVEQAIEMNRKFLNDVETLVEKERGGRLSKLSELTAQVAELEKLTAGWNEVIGANLTTQQLQVAVDAVHTALESDSMPRPFINELLAVKGLAGQDPIVNAAISSINPTAYQRGIPSTSQIIDRFRRVANEVRKASLLPEDAGVASHATSYLMSKVMFKKEVSSSGDDVESILTRTEKLLEEGNLDEAAREMNALRGWSKLLSKDWLADQWMLTQAL</sequence>
<feature type="transit peptide" description="Mitochondrion" evidence="2">
    <location>
        <begin position="1"/>
        <end position="38"/>
    </location>
</feature>
<feature type="chain" id="PRO_0000406659" description="MICOS complex subunit MIC60">
    <location>
        <begin position="39"/>
        <end position="671"/>
    </location>
</feature>
<feature type="topological domain" description="Mitochondrial matrix" evidence="2">
    <location>
        <begin position="39"/>
        <end position="150"/>
    </location>
</feature>
<feature type="transmembrane region" description="Helical" evidence="2">
    <location>
        <begin position="151"/>
        <end position="171"/>
    </location>
</feature>
<feature type="topological domain" description="Mitochondrial intermembrane" evidence="2">
    <location>
        <begin position="172"/>
        <end position="671"/>
    </location>
</feature>
<feature type="region of interest" description="Disordered" evidence="3">
    <location>
        <begin position="1"/>
        <end position="54"/>
    </location>
</feature>
<feature type="region of interest" description="Disordered" evidence="3">
    <location>
        <begin position="70"/>
        <end position="144"/>
    </location>
</feature>
<feature type="region of interest" description="Disordered" evidence="3">
    <location>
        <begin position="210"/>
        <end position="316"/>
    </location>
</feature>
<feature type="coiled-coil region" evidence="2">
    <location>
        <begin position="360"/>
        <end position="455"/>
    </location>
</feature>
<feature type="compositionally biased region" description="Polar residues" evidence="3">
    <location>
        <begin position="107"/>
        <end position="120"/>
    </location>
</feature>
<feature type="compositionally biased region" description="Pro residues" evidence="3">
    <location>
        <begin position="121"/>
        <end position="141"/>
    </location>
</feature>
<feature type="compositionally biased region" description="Basic and acidic residues" evidence="3">
    <location>
        <begin position="258"/>
        <end position="293"/>
    </location>
</feature>
<comment type="function">
    <text evidence="1">Component of the MICOS complex, a large protein complex of the mitochondrial inner membrane that plays crucial roles in the maintenance of crista junctions, inner membrane architecture, and formation of contact sites to the outer membrane. Plays a role in keeping cristae membranes connected to the inner boundary membrane. Also promotes protein import via the mitochondrial intermembrane space assembly (MIA) pathway (By similarity).</text>
</comment>
<comment type="subunit">
    <text evidence="1">Component of the mitochondrial contact site and cristae organizing system (MICOS) complex.</text>
</comment>
<comment type="subcellular location">
    <subcellularLocation>
        <location evidence="1">Mitochondrion inner membrane</location>
        <topology evidence="1">Single-pass membrane protein</topology>
    </subcellularLocation>
</comment>
<comment type="similarity">
    <text evidence="4">Belongs to the MICOS complex subunit Mic60 family.</text>
</comment>
<protein>
    <recommendedName>
        <fullName>MICOS complex subunit MIC60</fullName>
    </recommendedName>
    <alternativeName>
        <fullName>Mitofilin</fullName>
    </alternativeName>
</protein>
<reference key="1">
    <citation type="journal article" date="2012" name="MBio">
        <title>Comparative genome analysis of Trichophyton rubrum and related dermatophytes reveals candidate genes involved in infection.</title>
        <authorList>
            <person name="Martinez D.A."/>
            <person name="Oliver B.G."/>
            <person name="Graeser Y."/>
            <person name="Goldberg J.M."/>
            <person name="Li W."/>
            <person name="Martinez-Rossi N.M."/>
            <person name="Monod M."/>
            <person name="Shelest E."/>
            <person name="Barton R.C."/>
            <person name="Birch E."/>
            <person name="Brakhage A.A."/>
            <person name="Chen Z."/>
            <person name="Gurr S.J."/>
            <person name="Heiman D."/>
            <person name="Heitman J."/>
            <person name="Kosti I."/>
            <person name="Rossi A."/>
            <person name="Saif S."/>
            <person name="Samalova M."/>
            <person name="Saunders C.W."/>
            <person name="Shea T."/>
            <person name="Summerbell R.C."/>
            <person name="Xu J."/>
            <person name="Young S."/>
            <person name="Zeng Q."/>
            <person name="Birren B.W."/>
            <person name="Cuomo C.A."/>
            <person name="White T.C."/>
        </authorList>
    </citation>
    <scope>NUCLEOTIDE SEQUENCE [LARGE SCALE GENOMIC DNA]</scope>
    <source>
        <strain>ATCC MYA-4605 / CBS 113480</strain>
    </source>
</reference>
<gene>
    <name type="primary">MIC60</name>
    <name type="ORF">MCYG_02615</name>
</gene>
<name>MIC60_ARTOC</name>
<accession>C5FGB1</accession>
<dbReference type="EMBL" id="DS995702">
    <property type="protein sequence ID" value="EEQ29796.1"/>
    <property type="molecule type" value="Genomic_DNA"/>
</dbReference>
<dbReference type="RefSeq" id="XP_002849681.1">
    <property type="nucleotide sequence ID" value="XM_002849635.1"/>
</dbReference>
<dbReference type="SMR" id="C5FGB1"/>
<dbReference type="STRING" id="554155.C5FGB1"/>
<dbReference type="GeneID" id="9222731"/>
<dbReference type="VEuPathDB" id="FungiDB:MCYG_02615"/>
<dbReference type="eggNOG" id="KOG1854">
    <property type="taxonomic scope" value="Eukaryota"/>
</dbReference>
<dbReference type="HOGENOM" id="CLU_008024_1_2_1"/>
<dbReference type="OMA" id="RLDHQMQ"/>
<dbReference type="OrthoDB" id="10261039at2759"/>
<dbReference type="Proteomes" id="UP000002035">
    <property type="component" value="Unassembled WGS sequence"/>
</dbReference>
<dbReference type="GO" id="GO:0061617">
    <property type="term" value="C:MICOS complex"/>
    <property type="evidence" value="ECO:0007669"/>
    <property type="project" value="TreeGrafter"/>
</dbReference>
<dbReference type="GO" id="GO:0042407">
    <property type="term" value="P:cristae formation"/>
    <property type="evidence" value="ECO:0007669"/>
    <property type="project" value="TreeGrafter"/>
</dbReference>
<dbReference type="InterPro" id="IPR019133">
    <property type="entry name" value="MIC60"/>
</dbReference>
<dbReference type="PANTHER" id="PTHR15415:SF7">
    <property type="entry name" value="MICOS COMPLEX SUBUNIT MIC60"/>
    <property type="match status" value="1"/>
</dbReference>
<dbReference type="PANTHER" id="PTHR15415">
    <property type="entry name" value="MITOFILIN"/>
    <property type="match status" value="1"/>
</dbReference>
<dbReference type="Pfam" id="PF09731">
    <property type="entry name" value="Mitofilin"/>
    <property type="match status" value="2"/>
</dbReference>